<sequence>MHRYRSHTCAQLRKSDVGSSVRLSGWVHRVRDHGGLLFIDLRDHYGLTQIVADPDSPAFKVAETVRGEWVIRVDGEVKARLSETVNANLPTGEIEIFAREIEVLSAAKELPLPVFGEPDYPEDIRLKYRFLDLRRDTLHKNIVARTKIIAEMRKRMGDVGFTEFSTPILTASSPEGARDFLVPSRIHPGTFYALPQAPQQYKQLIMVSGFDRYFQIAPCFRDEDPRADRLPGEFYQLDLEMSFVEQDDVLNTMEPVLRGVFETFANGKPVTQKFQRIPYDVAMRKYGSDKPDLRNPIEMQAVSDHFRDSGFKVFANILANDPKAEVWGIPAKTGGSRAFCDRMNSWAQGEGQPGLGYIFWRKEGDKLEGAGPLAKNIGEERTEAIRQQLGLADGDAAFFVAGDPKKFVSFAGAARTRAGEELNLVDRERFELCWIVDFPFFEWNEEEKKIDFAHNPFSMPQGGIDALNGEDLLGIKAFQYDMVCNGFEIASGGIRNHLPETMVKAFETVGLDRATVEERFGGLYRAFQYGAPPHGGMAAGIDRVVMLLVGAKNLREVTMFPMNQQAYDLLMNAPSEASPQQLRELALRVAPTKKDA</sequence>
<name>SYDND_RHILO</name>
<accession>Q983E9</accession>
<evidence type="ECO:0000255" key="1">
    <source>
        <dbReference type="HAMAP-Rule" id="MF_00044"/>
    </source>
</evidence>
<feature type="chain" id="PRO_0000110928" description="Aspartate--tRNA(Asp/Asn) ligase">
    <location>
        <begin position="1"/>
        <end position="596"/>
    </location>
</feature>
<feature type="region of interest" description="Aspartate" evidence="1">
    <location>
        <begin position="199"/>
        <end position="202"/>
    </location>
</feature>
<feature type="binding site" evidence="1">
    <location>
        <position position="175"/>
    </location>
    <ligand>
        <name>L-aspartate</name>
        <dbReference type="ChEBI" id="CHEBI:29991"/>
    </ligand>
</feature>
<feature type="binding site" evidence="1">
    <location>
        <begin position="221"/>
        <end position="223"/>
    </location>
    <ligand>
        <name>ATP</name>
        <dbReference type="ChEBI" id="CHEBI:30616"/>
    </ligand>
</feature>
<feature type="binding site" evidence="1">
    <location>
        <position position="221"/>
    </location>
    <ligand>
        <name>L-aspartate</name>
        <dbReference type="ChEBI" id="CHEBI:29991"/>
    </ligand>
</feature>
<feature type="binding site" evidence="1">
    <location>
        <position position="454"/>
    </location>
    <ligand>
        <name>L-aspartate</name>
        <dbReference type="ChEBI" id="CHEBI:29991"/>
    </ligand>
</feature>
<feature type="binding site" evidence="1">
    <location>
        <position position="488"/>
    </location>
    <ligand>
        <name>ATP</name>
        <dbReference type="ChEBI" id="CHEBI:30616"/>
    </ligand>
</feature>
<feature type="binding site" evidence="1">
    <location>
        <position position="495"/>
    </location>
    <ligand>
        <name>L-aspartate</name>
        <dbReference type="ChEBI" id="CHEBI:29991"/>
    </ligand>
</feature>
<feature type="binding site" evidence="1">
    <location>
        <begin position="540"/>
        <end position="543"/>
    </location>
    <ligand>
        <name>ATP</name>
        <dbReference type="ChEBI" id="CHEBI:30616"/>
    </ligand>
</feature>
<feature type="site" description="Important for tRNA non-discrimination" evidence="1">
    <location>
        <position position="33"/>
    </location>
</feature>
<reference key="1">
    <citation type="journal article" date="2000" name="DNA Res.">
        <title>Complete genome structure of the nitrogen-fixing symbiotic bacterium Mesorhizobium loti.</title>
        <authorList>
            <person name="Kaneko T."/>
            <person name="Nakamura Y."/>
            <person name="Sato S."/>
            <person name="Asamizu E."/>
            <person name="Kato T."/>
            <person name="Sasamoto S."/>
            <person name="Watanabe A."/>
            <person name="Idesawa K."/>
            <person name="Ishikawa A."/>
            <person name="Kawashima K."/>
            <person name="Kimura T."/>
            <person name="Kishida Y."/>
            <person name="Kiyokawa C."/>
            <person name="Kohara M."/>
            <person name="Matsumoto M."/>
            <person name="Matsuno A."/>
            <person name="Mochizuki Y."/>
            <person name="Nakayama S."/>
            <person name="Nakazaki N."/>
            <person name="Shimpo S."/>
            <person name="Sugimoto M."/>
            <person name="Takeuchi C."/>
            <person name="Yamada M."/>
            <person name="Tabata S."/>
        </authorList>
    </citation>
    <scope>NUCLEOTIDE SEQUENCE [LARGE SCALE GENOMIC DNA]</scope>
    <source>
        <strain>LMG 29417 / CECT 9101 / MAFF 303099</strain>
    </source>
</reference>
<organism>
    <name type="scientific">Mesorhizobium japonicum (strain LMG 29417 / CECT 9101 / MAFF 303099)</name>
    <name type="common">Mesorhizobium loti (strain MAFF 303099)</name>
    <dbReference type="NCBI Taxonomy" id="266835"/>
    <lineage>
        <taxon>Bacteria</taxon>
        <taxon>Pseudomonadati</taxon>
        <taxon>Pseudomonadota</taxon>
        <taxon>Alphaproteobacteria</taxon>
        <taxon>Hyphomicrobiales</taxon>
        <taxon>Phyllobacteriaceae</taxon>
        <taxon>Mesorhizobium</taxon>
    </lineage>
</organism>
<comment type="function">
    <text evidence="1">Aspartyl-tRNA synthetase with relaxed tRNA specificity since it is able to aspartylate not only its cognate tRNA(Asp) but also tRNA(Asn). Reaction proceeds in two steps: L-aspartate is first activated by ATP to form Asp-AMP and then transferred to the acceptor end of tRNA(Asp/Asn).</text>
</comment>
<comment type="catalytic activity">
    <reaction evidence="1">
        <text>tRNA(Asx) + L-aspartate + ATP = L-aspartyl-tRNA(Asx) + AMP + diphosphate</text>
        <dbReference type="Rhea" id="RHEA:18349"/>
        <dbReference type="Rhea" id="RHEA-COMP:9710"/>
        <dbReference type="Rhea" id="RHEA-COMP:9711"/>
        <dbReference type="ChEBI" id="CHEBI:29991"/>
        <dbReference type="ChEBI" id="CHEBI:30616"/>
        <dbReference type="ChEBI" id="CHEBI:33019"/>
        <dbReference type="ChEBI" id="CHEBI:78442"/>
        <dbReference type="ChEBI" id="CHEBI:78516"/>
        <dbReference type="ChEBI" id="CHEBI:456215"/>
        <dbReference type="EC" id="6.1.1.23"/>
    </reaction>
</comment>
<comment type="subunit">
    <text evidence="1">Homodimer.</text>
</comment>
<comment type="subcellular location">
    <subcellularLocation>
        <location evidence="1">Cytoplasm</location>
    </subcellularLocation>
</comment>
<comment type="similarity">
    <text evidence="1">Belongs to the class-II aminoacyl-tRNA synthetase family. Type 1 subfamily.</text>
</comment>
<keyword id="KW-0030">Aminoacyl-tRNA synthetase</keyword>
<keyword id="KW-0067">ATP-binding</keyword>
<keyword id="KW-0963">Cytoplasm</keyword>
<keyword id="KW-0436">Ligase</keyword>
<keyword id="KW-0547">Nucleotide-binding</keyword>
<keyword id="KW-0648">Protein biosynthesis</keyword>
<proteinExistence type="inferred from homology"/>
<gene>
    <name evidence="1" type="primary">aspS</name>
    <name type="ordered locus">mlr8358</name>
</gene>
<protein>
    <recommendedName>
        <fullName evidence="1">Aspartate--tRNA(Asp/Asn) ligase</fullName>
        <ecNumber evidence="1">6.1.1.23</ecNumber>
    </recommendedName>
    <alternativeName>
        <fullName evidence="1">Aspartyl-tRNA synthetase</fullName>
        <shortName evidence="1">AspRS</shortName>
    </alternativeName>
    <alternativeName>
        <fullName evidence="1">Non-discriminating aspartyl-tRNA synthetase</fullName>
        <shortName evidence="1">ND-AspRS</shortName>
    </alternativeName>
</protein>
<dbReference type="EC" id="6.1.1.23" evidence="1"/>
<dbReference type="EMBL" id="BA000012">
    <property type="protein sequence ID" value="BAB53932.1"/>
    <property type="molecule type" value="Genomic_DNA"/>
</dbReference>
<dbReference type="SMR" id="Q983E9"/>
<dbReference type="KEGG" id="mlo:mlr8358"/>
<dbReference type="PATRIC" id="fig|266835.9.peg.6679"/>
<dbReference type="eggNOG" id="COG0173">
    <property type="taxonomic scope" value="Bacteria"/>
</dbReference>
<dbReference type="HOGENOM" id="CLU_014330_3_2_5"/>
<dbReference type="Proteomes" id="UP000000552">
    <property type="component" value="Chromosome"/>
</dbReference>
<dbReference type="GO" id="GO:0005737">
    <property type="term" value="C:cytoplasm"/>
    <property type="evidence" value="ECO:0007669"/>
    <property type="project" value="UniProtKB-SubCell"/>
</dbReference>
<dbReference type="GO" id="GO:0004815">
    <property type="term" value="F:aspartate-tRNA ligase activity"/>
    <property type="evidence" value="ECO:0007669"/>
    <property type="project" value="UniProtKB-UniRule"/>
</dbReference>
<dbReference type="GO" id="GO:0050560">
    <property type="term" value="F:aspartate-tRNA(Asn) ligase activity"/>
    <property type="evidence" value="ECO:0007669"/>
    <property type="project" value="UniProtKB-EC"/>
</dbReference>
<dbReference type="GO" id="GO:0005524">
    <property type="term" value="F:ATP binding"/>
    <property type="evidence" value="ECO:0007669"/>
    <property type="project" value="UniProtKB-UniRule"/>
</dbReference>
<dbReference type="GO" id="GO:0003676">
    <property type="term" value="F:nucleic acid binding"/>
    <property type="evidence" value="ECO:0007669"/>
    <property type="project" value="InterPro"/>
</dbReference>
<dbReference type="GO" id="GO:0006422">
    <property type="term" value="P:aspartyl-tRNA aminoacylation"/>
    <property type="evidence" value="ECO:0007669"/>
    <property type="project" value="UniProtKB-UniRule"/>
</dbReference>
<dbReference type="CDD" id="cd00777">
    <property type="entry name" value="AspRS_core"/>
    <property type="match status" value="1"/>
</dbReference>
<dbReference type="CDD" id="cd04317">
    <property type="entry name" value="EcAspRS_like_N"/>
    <property type="match status" value="1"/>
</dbReference>
<dbReference type="Gene3D" id="3.30.930.10">
    <property type="entry name" value="Bira Bifunctional Protein, Domain 2"/>
    <property type="match status" value="1"/>
</dbReference>
<dbReference type="Gene3D" id="3.30.1360.30">
    <property type="entry name" value="GAD-like domain"/>
    <property type="match status" value="1"/>
</dbReference>
<dbReference type="Gene3D" id="2.40.50.140">
    <property type="entry name" value="Nucleic acid-binding proteins"/>
    <property type="match status" value="1"/>
</dbReference>
<dbReference type="HAMAP" id="MF_00044">
    <property type="entry name" value="Asp_tRNA_synth_type1"/>
    <property type="match status" value="1"/>
</dbReference>
<dbReference type="InterPro" id="IPR004364">
    <property type="entry name" value="Aa-tRNA-synt_II"/>
</dbReference>
<dbReference type="InterPro" id="IPR006195">
    <property type="entry name" value="aa-tRNA-synth_II"/>
</dbReference>
<dbReference type="InterPro" id="IPR045864">
    <property type="entry name" value="aa-tRNA-synth_II/BPL/LPL"/>
</dbReference>
<dbReference type="InterPro" id="IPR004524">
    <property type="entry name" value="Asp-tRNA-ligase_1"/>
</dbReference>
<dbReference type="InterPro" id="IPR047089">
    <property type="entry name" value="Asp-tRNA-ligase_1_N"/>
</dbReference>
<dbReference type="InterPro" id="IPR002312">
    <property type="entry name" value="Asp/Asn-tRNA-synth_IIb"/>
</dbReference>
<dbReference type="InterPro" id="IPR047090">
    <property type="entry name" value="AspRS_core"/>
</dbReference>
<dbReference type="InterPro" id="IPR004115">
    <property type="entry name" value="GAD-like_sf"/>
</dbReference>
<dbReference type="InterPro" id="IPR029351">
    <property type="entry name" value="GAD_dom"/>
</dbReference>
<dbReference type="InterPro" id="IPR012340">
    <property type="entry name" value="NA-bd_OB-fold"/>
</dbReference>
<dbReference type="InterPro" id="IPR004365">
    <property type="entry name" value="NA-bd_OB_tRNA"/>
</dbReference>
<dbReference type="NCBIfam" id="TIGR00459">
    <property type="entry name" value="aspS_bact"/>
    <property type="match status" value="1"/>
</dbReference>
<dbReference type="NCBIfam" id="NF001750">
    <property type="entry name" value="PRK00476.1"/>
    <property type="match status" value="1"/>
</dbReference>
<dbReference type="PANTHER" id="PTHR22594:SF5">
    <property type="entry name" value="ASPARTATE--TRNA LIGASE, MITOCHONDRIAL"/>
    <property type="match status" value="1"/>
</dbReference>
<dbReference type="PANTHER" id="PTHR22594">
    <property type="entry name" value="ASPARTYL/LYSYL-TRNA SYNTHETASE"/>
    <property type="match status" value="1"/>
</dbReference>
<dbReference type="Pfam" id="PF02938">
    <property type="entry name" value="GAD"/>
    <property type="match status" value="1"/>
</dbReference>
<dbReference type="Pfam" id="PF00152">
    <property type="entry name" value="tRNA-synt_2"/>
    <property type="match status" value="1"/>
</dbReference>
<dbReference type="Pfam" id="PF01336">
    <property type="entry name" value="tRNA_anti-codon"/>
    <property type="match status" value="1"/>
</dbReference>
<dbReference type="PRINTS" id="PR01042">
    <property type="entry name" value="TRNASYNTHASP"/>
</dbReference>
<dbReference type="SUPFAM" id="SSF55681">
    <property type="entry name" value="Class II aaRS and biotin synthetases"/>
    <property type="match status" value="1"/>
</dbReference>
<dbReference type="SUPFAM" id="SSF55261">
    <property type="entry name" value="GAD domain-like"/>
    <property type="match status" value="1"/>
</dbReference>
<dbReference type="SUPFAM" id="SSF50249">
    <property type="entry name" value="Nucleic acid-binding proteins"/>
    <property type="match status" value="1"/>
</dbReference>
<dbReference type="PROSITE" id="PS50862">
    <property type="entry name" value="AA_TRNA_LIGASE_II"/>
    <property type="match status" value="1"/>
</dbReference>